<evidence type="ECO:0000255" key="1"/>
<evidence type="ECO:0000255" key="2">
    <source>
        <dbReference type="PROSITE-ProRule" id="PRU00205"/>
    </source>
</evidence>
<evidence type="ECO:0000305" key="3"/>
<comment type="subcellular location">
    <subcellularLocation>
        <location evidence="3">Membrane</location>
        <topology evidence="3">Multi-pass membrane protein</topology>
    </subcellularLocation>
</comment>
<comment type="similarity">
    <text evidence="3">Belongs to the TLCD4 family.</text>
</comment>
<organism>
    <name type="scientific">Dictyostelium discoideum</name>
    <name type="common">Social amoeba</name>
    <dbReference type="NCBI Taxonomy" id="44689"/>
    <lineage>
        <taxon>Eukaryota</taxon>
        <taxon>Amoebozoa</taxon>
        <taxon>Evosea</taxon>
        <taxon>Eumycetozoa</taxon>
        <taxon>Dictyostelia</taxon>
        <taxon>Dictyosteliales</taxon>
        <taxon>Dictyosteliaceae</taxon>
        <taxon>Dictyostelium</taxon>
    </lineage>
</organism>
<protein>
    <recommendedName>
        <fullName evidence="3">TLC domain-containing protein 4 A</fullName>
    </recommendedName>
    <alternativeName>
        <fullName>Transmembrane protein 56 homolog A</fullName>
    </alternativeName>
</protein>
<feature type="chain" id="PRO_0000327986" description="TLC domain-containing protein 4 A">
    <location>
        <begin position="1"/>
        <end position="258"/>
    </location>
</feature>
<feature type="transmembrane region" description="Helical" evidence="1">
    <location>
        <begin position="8"/>
        <end position="28"/>
    </location>
</feature>
<feature type="transmembrane region" description="Helical" evidence="1">
    <location>
        <begin position="49"/>
        <end position="71"/>
    </location>
</feature>
<feature type="transmembrane region" description="Helical" evidence="1">
    <location>
        <begin position="92"/>
        <end position="112"/>
    </location>
</feature>
<feature type="transmembrane region" description="Helical" evidence="1">
    <location>
        <begin position="118"/>
        <end position="138"/>
    </location>
</feature>
<feature type="transmembrane region" description="Helical" evidence="1">
    <location>
        <begin position="144"/>
        <end position="164"/>
    </location>
</feature>
<feature type="transmembrane region" description="Helical" evidence="1">
    <location>
        <begin position="170"/>
        <end position="190"/>
    </location>
</feature>
<feature type="transmembrane region" description="Helical" evidence="1">
    <location>
        <begin position="217"/>
        <end position="237"/>
    </location>
</feature>
<feature type="domain" description="TLC" evidence="2">
    <location>
        <begin position="46"/>
        <end position="245"/>
    </location>
</feature>
<gene>
    <name type="primary">tlcd4a</name>
    <name type="synonym">tmem56a</name>
    <name type="ORF">DDB_G0277027</name>
</gene>
<reference key="1">
    <citation type="journal article" date="2002" name="Nature">
        <title>Sequence and analysis of chromosome 2 of Dictyostelium discoideum.</title>
        <authorList>
            <person name="Gloeckner G."/>
            <person name="Eichinger L."/>
            <person name="Szafranski K."/>
            <person name="Pachebat J.A."/>
            <person name="Bankier A.T."/>
            <person name="Dear P.H."/>
            <person name="Lehmann R."/>
            <person name="Baumgart C."/>
            <person name="Parra G."/>
            <person name="Abril J.F."/>
            <person name="Guigo R."/>
            <person name="Kumpf K."/>
            <person name="Tunggal B."/>
            <person name="Cox E.C."/>
            <person name="Quail M.A."/>
            <person name="Platzer M."/>
            <person name="Rosenthal A."/>
            <person name="Noegel A.A."/>
        </authorList>
    </citation>
    <scope>NUCLEOTIDE SEQUENCE [LARGE SCALE GENOMIC DNA]</scope>
    <source>
        <strain>AX4</strain>
    </source>
</reference>
<reference key="2">
    <citation type="journal article" date="2005" name="Nature">
        <title>The genome of the social amoeba Dictyostelium discoideum.</title>
        <authorList>
            <person name="Eichinger L."/>
            <person name="Pachebat J.A."/>
            <person name="Gloeckner G."/>
            <person name="Rajandream M.A."/>
            <person name="Sucgang R."/>
            <person name="Berriman M."/>
            <person name="Song J."/>
            <person name="Olsen R."/>
            <person name="Szafranski K."/>
            <person name="Xu Q."/>
            <person name="Tunggal B."/>
            <person name="Kummerfeld S."/>
            <person name="Madera M."/>
            <person name="Konfortov B.A."/>
            <person name="Rivero F."/>
            <person name="Bankier A.T."/>
            <person name="Lehmann R."/>
            <person name="Hamlin N."/>
            <person name="Davies R."/>
            <person name="Gaudet P."/>
            <person name="Fey P."/>
            <person name="Pilcher K."/>
            <person name="Chen G."/>
            <person name="Saunders D."/>
            <person name="Sodergren E.J."/>
            <person name="Davis P."/>
            <person name="Kerhornou A."/>
            <person name="Nie X."/>
            <person name="Hall N."/>
            <person name="Anjard C."/>
            <person name="Hemphill L."/>
            <person name="Bason N."/>
            <person name="Farbrother P."/>
            <person name="Desany B."/>
            <person name="Just E."/>
            <person name="Morio T."/>
            <person name="Rost R."/>
            <person name="Churcher C.M."/>
            <person name="Cooper J."/>
            <person name="Haydock S."/>
            <person name="van Driessche N."/>
            <person name="Cronin A."/>
            <person name="Goodhead I."/>
            <person name="Muzny D.M."/>
            <person name="Mourier T."/>
            <person name="Pain A."/>
            <person name="Lu M."/>
            <person name="Harper D."/>
            <person name="Lindsay R."/>
            <person name="Hauser H."/>
            <person name="James K.D."/>
            <person name="Quiles M."/>
            <person name="Madan Babu M."/>
            <person name="Saito T."/>
            <person name="Buchrieser C."/>
            <person name="Wardroper A."/>
            <person name="Felder M."/>
            <person name="Thangavelu M."/>
            <person name="Johnson D."/>
            <person name="Knights A."/>
            <person name="Loulseged H."/>
            <person name="Mungall K.L."/>
            <person name="Oliver K."/>
            <person name="Price C."/>
            <person name="Quail M.A."/>
            <person name="Urushihara H."/>
            <person name="Hernandez J."/>
            <person name="Rabbinowitsch E."/>
            <person name="Steffen D."/>
            <person name="Sanders M."/>
            <person name="Ma J."/>
            <person name="Kohara Y."/>
            <person name="Sharp S."/>
            <person name="Simmonds M.N."/>
            <person name="Spiegler S."/>
            <person name="Tivey A."/>
            <person name="Sugano S."/>
            <person name="White B."/>
            <person name="Walker D."/>
            <person name="Woodward J.R."/>
            <person name="Winckler T."/>
            <person name="Tanaka Y."/>
            <person name="Shaulsky G."/>
            <person name="Schleicher M."/>
            <person name="Weinstock G.M."/>
            <person name="Rosenthal A."/>
            <person name="Cox E.C."/>
            <person name="Chisholm R.L."/>
            <person name="Gibbs R.A."/>
            <person name="Loomis W.F."/>
            <person name="Platzer M."/>
            <person name="Kay R.R."/>
            <person name="Williams J.G."/>
            <person name="Dear P.H."/>
            <person name="Noegel A.A."/>
            <person name="Barrell B.G."/>
            <person name="Kuspa A."/>
        </authorList>
    </citation>
    <scope>NUCLEOTIDE SEQUENCE [LARGE SCALE GENOMIC DNA]</scope>
    <source>
        <strain>AX4</strain>
    </source>
</reference>
<keyword id="KW-0472">Membrane</keyword>
<keyword id="KW-1185">Reference proteome</keyword>
<keyword id="KW-0812">Transmembrane</keyword>
<keyword id="KW-1133">Transmembrane helix</keyword>
<sequence length="258" mass="30690">MFSYISNYLISVEPLGFILYYTSLYIWIPSLLQTIFNNNEKQLSYSSKIEWTNKIVATISSIVSFSLSCYCIYNKKSWVTNEMTSTCALSDFILKFISFYFLFDALHLIIYYKQLFDWPIIIHHLVVGILSYVYIGLYYKKVHLTLLYFLLFEITNPFIHMKWFLKDLKLENHILYSINGFMMAFFFIFIRDIYVPIKVVKIYINGYTELNSIANTIIFFCFPIITILNLFWTYLVIKGILKHLSRTKTSTPQIKKKN</sequence>
<proteinExistence type="inferred from homology"/>
<name>TLC4A_DICDI</name>
<accession>Q550T0</accession>
<accession>Q86JB8</accession>
<dbReference type="EMBL" id="AAFI02000019">
    <property type="protein sequence ID" value="EAL69015.1"/>
    <property type="molecule type" value="Genomic_DNA"/>
</dbReference>
<dbReference type="RefSeq" id="XP_642852.1">
    <property type="nucleotide sequence ID" value="XM_637760.1"/>
</dbReference>
<dbReference type="SMR" id="Q550T0"/>
<dbReference type="FunCoup" id="Q550T0">
    <property type="interactions" value="182"/>
</dbReference>
<dbReference type="PaxDb" id="44689-DDB0232173"/>
<dbReference type="EnsemblProtists" id="EAL69015">
    <property type="protein sequence ID" value="EAL69015"/>
    <property type="gene ID" value="DDB_G0277027"/>
</dbReference>
<dbReference type="GeneID" id="8620716"/>
<dbReference type="KEGG" id="ddi:DDB_G0277027"/>
<dbReference type="dictyBase" id="DDB_G0277027">
    <property type="gene designation" value="tmem56A"/>
</dbReference>
<dbReference type="VEuPathDB" id="AmoebaDB:DDB_G0277027"/>
<dbReference type="HOGENOM" id="CLU_1079369_0_0_1"/>
<dbReference type="InParanoid" id="Q550T0"/>
<dbReference type="OMA" id="ILMCKMA"/>
<dbReference type="PhylomeDB" id="Q550T0"/>
<dbReference type="PRO" id="PR:Q550T0"/>
<dbReference type="Proteomes" id="UP000002195">
    <property type="component" value="Chromosome 2"/>
</dbReference>
<dbReference type="GO" id="GO:0005783">
    <property type="term" value="C:endoplasmic reticulum"/>
    <property type="evidence" value="ECO:0000318"/>
    <property type="project" value="GO_Central"/>
</dbReference>
<dbReference type="GO" id="GO:0016020">
    <property type="term" value="C:membrane"/>
    <property type="evidence" value="ECO:0007669"/>
    <property type="project" value="UniProtKB-SubCell"/>
</dbReference>
<dbReference type="GO" id="GO:0055088">
    <property type="term" value="P:lipid homeostasis"/>
    <property type="evidence" value="ECO:0000318"/>
    <property type="project" value="GO_Central"/>
</dbReference>
<dbReference type="InterPro" id="IPR006634">
    <property type="entry name" value="TLC-dom"/>
</dbReference>
<dbReference type="InterPro" id="IPR050846">
    <property type="entry name" value="TLCD"/>
</dbReference>
<dbReference type="PANTHER" id="PTHR13439">
    <property type="entry name" value="CT120 PROTEIN"/>
    <property type="match status" value="1"/>
</dbReference>
<dbReference type="PANTHER" id="PTHR13439:SF0">
    <property type="entry name" value="TOPOISOMERASE I DAMAGE AFFECTED PROTEIN 4"/>
    <property type="match status" value="1"/>
</dbReference>
<dbReference type="Pfam" id="PF03798">
    <property type="entry name" value="TRAM_LAG1_CLN8"/>
    <property type="match status" value="1"/>
</dbReference>
<dbReference type="SMART" id="SM00724">
    <property type="entry name" value="TLC"/>
    <property type="match status" value="1"/>
</dbReference>
<dbReference type="PROSITE" id="PS50922">
    <property type="entry name" value="TLC"/>
    <property type="match status" value="1"/>
</dbReference>